<protein>
    <recommendedName>
        <fullName evidence="1">Glucans biosynthesis protein D</fullName>
    </recommendedName>
</protein>
<feature type="signal peptide" description="Tat-type signal" evidence="1">
    <location>
        <begin position="1"/>
        <end position="32"/>
    </location>
</feature>
<feature type="chain" id="PRO_1000064544" description="Glucans biosynthesis protein D">
    <location>
        <begin position="33"/>
        <end position="551"/>
    </location>
</feature>
<proteinExistence type="inferred from homology"/>
<sequence length="551" mass="62749">MDRRRFIKGSMAMAAVCGTSGIASLFSQAAFAADSDIADGQTQRFDFSILQSMAHDLAQTAWHGAPRPLPDTLATMTPQAYNSIQYDAEKSLWHNVENRQLDAQFFHMGMGFRRRVRMFSVDPATHLAREIHFRPELFKYNDAGVDTKQLEGQSDLGFAGFRVFKAPELARRDVVSFLGASYFRAVDDTYQYGLSARGLAIDTYTDSKEEFPDFTAFWFDTVKPGATTFTVYALLDSASITGAYKFTIHCEKSQVIMDVENHLYARKDIKQLGIAPMTSMFSCGTNERRMCDTIHPQIHDSDRLSMWRGNGEWICRPLNNPQKLQFNAYTDNNPKGFGLLQLDRDFSHYQDIMGWYNKRPSLWVEPRNKWGKGTIGLMEIPTTGETLDNIVCFWQPEKAVKAGDEFAFQYRLYWSAQPPVHCPLARVMATRTGMGGFPEGWAPGEHYPEKWARRFAVDFVGGDLKAAAPKGIEPVITLSSGEAKQIEILYIEPIDGYRIQFDWYPTSDSTDPVDMRMYLRCQGDAISETWLYQYFPPAPDKRQYVDDRVMS</sequence>
<keyword id="KW-0574">Periplasm</keyword>
<keyword id="KW-0732">Signal</keyword>
<accession>A7ZZY2</accession>
<evidence type="ECO:0000255" key="1">
    <source>
        <dbReference type="HAMAP-Rule" id="MF_01068"/>
    </source>
</evidence>
<comment type="function">
    <text evidence="1">Probably involved in the control of the structural glucose backbone of osmoregulated periplasmic glucans (OPGs).</text>
</comment>
<comment type="pathway">
    <text evidence="1">Glycan metabolism; osmoregulated periplasmic glucan (OPG) biosynthesis.</text>
</comment>
<comment type="subcellular location">
    <subcellularLocation>
        <location evidence="1">Periplasm</location>
    </subcellularLocation>
</comment>
<comment type="PTM">
    <text>Predicted to be exported by the Tat system. The position of the signal peptide cleavage has not been experimentally proven.</text>
</comment>
<comment type="similarity">
    <text evidence="1">Belongs to the OpgD/OpgG family.</text>
</comment>
<reference key="1">
    <citation type="journal article" date="2008" name="J. Bacteriol.">
        <title>The pangenome structure of Escherichia coli: comparative genomic analysis of E. coli commensal and pathogenic isolates.</title>
        <authorList>
            <person name="Rasko D.A."/>
            <person name="Rosovitz M.J."/>
            <person name="Myers G.S.A."/>
            <person name="Mongodin E.F."/>
            <person name="Fricke W.F."/>
            <person name="Gajer P."/>
            <person name="Crabtree J."/>
            <person name="Sebaihia M."/>
            <person name="Thomson N.R."/>
            <person name="Chaudhuri R."/>
            <person name="Henderson I.R."/>
            <person name="Sperandio V."/>
            <person name="Ravel J."/>
        </authorList>
    </citation>
    <scope>NUCLEOTIDE SEQUENCE [LARGE SCALE GENOMIC DNA]</scope>
    <source>
        <strain>HS</strain>
    </source>
</reference>
<organism>
    <name type="scientific">Escherichia coli O9:H4 (strain HS)</name>
    <dbReference type="NCBI Taxonomy" id="331112"/>
    <lineage>
        <taxon>Bacteria</taxon>
        <taxon>Pseudomonadati</taxon>
        <taxon>Pseudomonadota</taxon>
        <taxon>Gammaproteobacteria</taxon>
        <taxon>Enterobacterales</taxon>
        <taxon>Enterobacteriaceae</taxon>
        <taxon>Escherichia</taxon>
    </lineage>
</organism>
<name>OPGD_ECOHS</name>
<dbReference type="EMBL" id="CP000802">
    <property type="protein sequence ID" value="ABV05836.1"/>
    <property type="molecule type" value="Genomic_DNA"/>
</dbReference>
<dbReference type="RefSeq" id="WP_000375938.1">
    <property type="nucleotide sequence ID" value="NC_009800.1"/>
</dbReference>
<dbReference type="SMR" id="A7ZZY2"/>
<dbReference type="KEGG" id="ecx:EcHS_A1506"/>
<dbReference type="HOGENOM" id="CLU_023403_2_0_6"/>
<dbReference type="UniPathway" id="UPA00637"/>
<dbReference type="GO" id="GO:0030288">
    <property type="term" value="C:outer membrane-bounded periplasmic space"/>
    <property type="evidence" value="ECO:0007669"/>
    <property type="project" value="TreeGrafter"/>
</dbReference>
<dbReference type="GO" id="GO:0030246">
    <property type="term" value="F:carbohydrate binding"/>
    <property type="evidence" value="ECO:0007669"/>
    <property type="project" value="InterPro"/>
</dbReference>
<dbReference type="GO" id="GO:0003824">
    <property type="term" value="F:catalytic activity"/>
    <property type="evidence" value="ECO:0007669"/>
    <property type="project" value="InterPro"/>
</dbReference>
<dbReference type="GO" id="GO:0051274">
    <property type="term" value="P:beta-glucan biosynthetic process"/>
    <property type="evidence" value="ECO:0007669"/>
    <property type="project" value="TreeGrafter"/>
</dbReference>
<dbReference type="FunFam" id="2.60.40.10:FF:000379">
    <property type="entry name" value="Glucans biosynthesis protein D"/>
    <property type="match status" value="1"/>
</dbReference>
<dbReference type="FunFam" id="2.70.98.10:FF:000004">
    <property type="entry name" value="Glucans biosynthesis protein D"/>
    <property type="match status" value="1"/>
</dbReference>
<dbReference type="Gene3D" id="2.70.98.10">
    <property type="match status" value="1"/>
</dbReference>
<dbReference type="Gene3D" id="2.60.40.10">
    <property type="entry name" value="Immunoglobulins"/>
    <property type="match status" value="1"/>
</dbReference>
<dbReference type="HAMAP" id="MF_01068">
    <property type="entry name" value="MdoD_OpgD"/>
    <property type="match status" value="1"/>
</dbReference>
<dbReference type="InterPro" id="IPR011013">
    <property type="entry name" value="Gal_mutarotase_sf_dom"/>
</dbReference>
<dbReference type="InterPro" id="IPR014718">
    <property type="entry name" value="GH-type_carb-bd"/>
</dbReference>
<dbReference type="InterPro" id="IPR023724">
    <property type="entry name" value="Glucan_biosyn_MdoD"/>
</dbReference>
<dbReference type="InterPro" id="IPR014438">
    <property type="entry name" value="Glucan_biosyn_MdoG/MdoD"/>
</dbReference>
<dbReference type="InterPro" id="IPR007444">
    <property type="entry name" value="Glucan_biosyn_MdoG_C"/>
</dbReference>
<dbReference type="InterPro" id="IPR013783">
    <property type="entry name" value="Ig-like_fold"/>
</dbReference>
<dbReference type="InterPro" id="IPR014756">
    <property type="entry name" value="Ig_E-set"/>
</dbReference>
<dbReference type="InterPro" id="IPR006311">
    <property type="entry name" value="TAT_signal"/>
</dbReference>
<dbReference type="InterPro" id="IPR019546">
    <property type="entry name" value="TAT_signal_bac_arc"/>
</dbReference>
<dbReference type="NCBIfam" id="TIGR01409">
    <property type="entry name" value="TAT_signal_seq"/>
    <property type="match status" value="1"/>
</dbReference>
<dbReference type="PANTHER" id="PTHR30504">
    <property type="entry name" value="GLUCANS BIOSYNTHESIS PROTEIN"/>
    <property type="match status" value="1"/>
</dbReference>
<dbReference type="PANTHER" id="PTHR30504:SF3">
    <property type="entry name" value="GLUCANS BIOSYNTHESIS PROTEIN D"/>
    <property type="match status" value="1"/>
</dbReference>
<dbReference type="Pfam" id="PF04349">
    <property type="entry name" value="MdoG"/>
    <property type="match status" value="1"/>
</dbReference>
<dbReference type="PIRSF" id="PIRSF006281">
    <property type="entry name" value="MdoG"/>
    <property type="match status" value="1"/>
</dbReference>
<dbReference type="SUPFAM" id="SSF81296">
    <property type="entry name" value="E set domains"/>
    <property type="match status" value="1"/>
</dbReference>
<dbReference type="SUPFAM" id="SSF74650">
    <property type="entry name" value="Galactose mutarotase-like"/>
    <property type="match status" value="1"/>
</dbReference>
<dbReference type="PROSITE" id="PS51318">
    <property type="entry name" value="TAT"/>
    <property type="match status" value="1"/>
</dbReference>
<gene>
    <name evidence="1" type="primary">mdoD</name>
    <name evidence="1" type="synonym">opgD</name>
    <name type="ordered locus">EcHS_A1506</name>
</gene>